<accession>Q57CR9</accession>
<protein>
    <recommendedName>
        <fullName evidence="1">Large ribosomal subunit protein uL24</fullName>
    </recommendedName>
    <alternativeName>
        <fullName evidence="2">50S ribosomal protein L24</fullName>
    </alternativeName>
</protein>
<organism>
    <name type="scientific">Brucella abortus biovar 1 (strain 9-941)</name>
    <dbReference type="NCBI Taxonomy" id="262698"/>
    <lineage>
        <taxon>Bacteria</taxon>
        <taxon>Pseudomonadati</taxon>
        <taxon>Pseudomonadota</taxon>
        <taxon>Alphaproteobacteria</taxon>
        <taxon>Hyphomicrobiales</taxon>
        <taxon>Brucellaceae</taxon>
        <taxon>Brucella/Ochrobactrum group</taxon>
        <taxon>Brucella</taxon>
    </lineage>
</organism>
<gene>
    <name evidence="1" type="primary">rplX</name>
    <name type="ordered locus">BruAb1_1227</name>
</gene>
<sequence length="103" mass="11208">MQKIRKGDSVVVLSGKDKGRKGEVLKVMPKDEQALVSGINIVKRHQRQTQTQEAGIISKEAPIHLSNLAIADPKDGKPTRVGFRVEDGKKVRVAKRSGALIDG</sequence>
<feature type="chain" id="PRO_0000241574" description="Large ribosomal subunit protein uL24">
    <location>
        <begin position="1"/>
        <end position="103"/>
    </location>
</feature>
<comment type="function">
    <text evidence="1">One of two assembly initiator proteins, it binds directly to the 5'-end of the 23S rRNA, where it nucleates assembly of the 50S subunit.</text>
</comment>
<comment type="function">
    <text evidence="1">One of the proteins that surrounds the polypeptide exit tunnel on the outside of the subunit.</text>
</comment>
<comment type="subunit">
    <text evidence="1">Part of the 50S ribosomal subunit.</text>
</comment>
<comment type="similarity">
    <text evidence="1">Belongs to the universal ribosomal protein uL24 family.</text>
</comment>
<dbReference type="EMBL" id="AE017223">
    <property type="protein sequence ID" value="AAX74565.1"/>
    <property type="molecule type" value="Genomic_DNA"/>
</dbReference>
<dbReference type="RefSeq" id="WP_002964351.1">
    <property type="nucleotide sequence ID" value="NC_006932.1"/>
</dbReference>
<dbReference type="SMR" id="Q57CR9"/>
<dbReference type="EnsemblBacteria" id="AAX74565">
    <property type="protein sequence ID" value="AAX74565"/>
    <property type="gene ID" value="BruAb1_1227"/>
</dbReference>
<dbReference type="GeneID" id="97533535"/>
<dbReference type="KEGG" id="bmb:BruAb1_1227"/>
<dbReference type="HOGENOM" id="CLU_093315_2_2_5"/>
<dbReference type="Proteomes" id="UP000000540">
    <property type="component" value="Chromosome I"/>
</dbReference>
<dbReference type="GO" id="GO:1990904">
    <property type="term" value="C:ribonucleoprotein complex"/>
    <property type="evidence" value="ECO:0007669"/>
    <property type="project" value="UniProtKB-KW"/>
</dbReference>
<dbReference type="GO" id="GO:0005840">
    <property type="term" value="C:ribosome"/>
    <property type="evidence" value="ECO:0007669"/>
    <property type="project" value="UniProtKB-KW"/>
</dbReference>
<dbReference type="GO" id="GO:0019843">
    <property type="term" value="F:rRNA binding"/>
    <property type="evidence" value="ECO:0007669"/>
    <property type="project" value="UniProtKB-UniRule"/>
</dbReference>
<dbReference type="GO" id="GO:0003735">
    <property type="term" value="F:structural constituent of ribosome"/>
    <property type="evidence" value="ECO:0007669"/>
    <property type="project" value="InterPro"/>
</dbReference>
<dbReference type="GO" id="GO:0006412">
    <property type="term" value="P:translation"/>
    <property type="evidence" value="ECO:0007669"/>
    <property type="project" value="UniProtKB-UniRule"/>
</dbReference>
<dbReference type="CDD" id="cd06089">
    <property type="entry name" value="KOW_RPL26"/>
    <property type="match status" value="1"/>
</dbReference>
<dbReference type="FunFam" id="2.30.30.30:FF:000004">
    <property type="entry name" value="50S ribosomal protein L24"/>
    <property type="match status" value="1"/>
</dbReference>
<dbReference type="Gene3D" id="2.30.30.30">
    <property type="match status" value="1"/>
</dbReference>
<dbReference type="HAMAP" id="MF_01326_B">
    <property type="entry name" value="Ribosomal_uL24_B"/>
    <property type="match status" value="1"/>
</dbReference>
<dbReference type="InterPro" id="IPR005824">
    <property type="entry name" value="KOW"/>
</dbReference>
<dbReference type="InterPro" id="IPR014722">
    <property type="entry name" value="Rib_uL2_dom2"/>
</dbReference>
<dbReference type="InterPro" id="IPR003256">
    <property type="entry name" value="Ribosomal_uL24"/>
</dbReference>
<dbReference type="InterPro" id="IPR005825">
    <property type="entry name" value="Ribosomal_uL24_CS"/>
</dbReference>
<dbReference type="InterPro" id="IPR041988">
    <property type="entry name" value="Ribosomal_uL24_KOW"/>
</dbReference>
<dbReference type="InterPro" id="IPR008991">
    <property type="entry name" value="Translation_prot_SH3-like_sf"/>
</dbReference>
<dbReference type="NCBIfam" id="TIGR01079">
    <property type="entry name" value="rplX_bact"/>
    <property type="match status" value="1"/>
</dbReference>
<dbReference type="PANTHER" id="PTHR12903">
    <property type="entry name" value="MITOCHONDRIAL RIBOSOMAL PROTEIN L24"/>
    <property type="match status" value="1"/>
</dbReference>
<dbReference type="Pfam" id="PF00467">
    <property type="entry name" value="KOW"/>
    <property type="match status" value="1"/>
</dbReference>
<dbReference type="Pfam" id="PF17136">
    <property type="entry name" value="ribosomal_L24"/>
    <property type="match status" value="1"/>
</dbReference>
<dbReference type="SMART" id="SM00739">
    <property type="entry name" value="KOW"/>
    <property type="match status" value="1"/>
</dbReference>
<dbReference type="SUPFAM" id="SSF50104">
    <property type="entry name" value="Translation proteins SH3-like domain"/>
    <property type="match status" value="1"/>
</dbReference>
<dbReference type="PROSITE" id="PS01108">
    <property type="entry name" value="RIBOSOMAL_L24"/>
    <property type="match status" value="1"/>
</dbReference>
<evidence type="ECO:0000255" key="1">
    <source>
        <dbReference type="HAMAP-Rule" id="MF_01326"/>
    </source>
</evidence>
<evidence type="ECO:0000305" key="2"/>
<reference key="1">
    <citation type="journal article" date="2005" name="J. Bacteriol.">
        <title>Completion of the genome sequence of Brucella abortus and comparison to the highly similar genomes of Brucella melitensis and Brucella suis.</title>
        <authorList>
            <person name="Halling S.M."/>
            <person name="Peterson-Burch B.D."/>
            <person name="Bricker B.J."/>
            <person name="Zuerner R.L."/>
            <person name="Qing Z."/>
            <person name="Li L.-L."/>
            <person name="Kapur V."/>
            <person name="Alt D.P."/>
            <person name="Olsen S.C."/>
        </authorList>
    </citation>
    <scope>NUCLEOTIDE SEQUENCE [LARGE SCALE GENOMIC DNA]</scope>
    <source>
        <strain>9-941</strain>
    </source>
</reference>
<keyword id="KW-0687">Ribonucleoprotein</keyword>
<keyword id="KW-0689">Ribosomal protein</keyword>
<keyword id="KW-0694">RNA-binding</keyword>
<keyword id="KW-0699">rRNA-binding</keyword>
<name>RL24_BRUAB</name>
<proteinExistence type="inferred from homology"/>